<comment type="catalytic activity">
    <reaction evidence="1">
        <text>(S)-2,3,4,5-tetrahydrodipicolinate + succinyl-CoA + H2O = (S)-2-succinylamino-6-oxoheptanedioate + CoA</text>
        <dbReference type="Rhea" id="RHEA:17325"/>
        <dbReference type="ChEBI" id="CHEBI:15377"/>
        <dbReference type="ChEBI" id="CHEBI:15685"/>
        <dbReference type="ChEBI" id="CHEBI:16845"/>
        <dbReference type="ChEBI" id="CHEBI:57287"/>
        <dbReference type="ChEBI" id="CHEBI:57292"/>
        <dbReference type="EC" id="2.3.1.117"/>
    </reaction>
</comment>
<comment type="pathway">
    <text evidence="1">Amino-acid biosynthesis; L-lysine biosynthesis via DAP pathway; LL-2,6-diaminopimelate from (S)-tetrahydrodipicolinate (succinylase route): step 1/3.</text>
</comment>
<comment type="subunit">
    <text evidence="1">Homotrimer.</text>
</comment>
<comment type="subcellular location">
    <subcellularLocation>
        <location evidence="1">Cytoplasm</location>
    </subcellularLocation>
</comment>
<comment type="similarity">
    <text evidence="1">Belongs to the transferase hexapeptide repeat family.</text>
</comment>
<protein>
    <recommendedName>
        <fullName evidence="1">2,3,4,5-tetrahydropyridine-2,6-dicarboxylate N-succinyltransferase</fullName>
        <ecNumber evidence="1">2.3.1.117</ecNumber>
    </recommendedName>
    <alternativeName>
        <fullName evidence="1">Tetrahydrodipicolinate N-succinyltransferase</fullName>
        <shortName evidence="1">THDP succinyltransferase</shortName>
        <shortName evidence="1">THP succinyltransferase</shortName>
        <shortName evidence="1">Tetrahydropicolinate succinylase</shortName>
    </alternativeName>
</protein>
<keyword id="KW-0012">Acyltransferase</keyword>
<keyword id="KW-0028">Amino-acid biosynthesis</keyword>
<keyword id="KW-0963">Cytoplasm</keyword>
<keyword id="KW-0220">Diaminopimelate biosynthesis</keyword>
<keyword id="KW-0457">Lysine biosynthesis</keyword>
<keyword id="KW-0677">Repeat</keyword>
<keyword id="KW-0808">Transferase</keyword>
<organism>
    <name type="scientific">Shewanella baltica (strain OS185)</name>
    <dbReference type="NCBI Taxonomy" id="402882"/>
    <lineage>
        <taxon>Bacteria</taxon>
        <taxon>Pseudomonadati</taxon>
        <taxon>Pseudomonadota</taxon>
        <taxon>Gammaproteobacteria</taxon>
        <taxon>Alteromonadales</taxon>
        <taxon>Shewanellaceae</taxon>
        <taxon>Shewanella</taxon>
    </lineage>
</organism>
<name>DAPD_SHEB8</name>
<evidence type="ECO:0000255" key="1">
    <source>
        <dbReference type="HAMAP-Rule" id="MF_00811"/>
    </source>
</evidence>
<sequence length="274" mass="29720">MEALRQRIEAAFEARADITPSTVDASVRDDVQNVINMLDKGEVRVAEKIDGQWHVHQWLKKAVLLSFRIFDNVVIDGAETKYFDKVPLKFAEYDEARFKAEAIRVVPSATVRKGSFIGKNTVLMPSYVNLGAYVDEGTMVDTWATVGSCAQIGKNVHLSGGVGIGGVLEPLQAGPTIIEDNCFIGARSEIVEGVVVEEGSVISMGVYIGQSTRIYDRETGEVHYGRVPAGSVVVSGNLPSACGKYSLYAAIIVKKVDAKTRGKVGINELLRIVD</sequence>
<proteinExistence type="inferred from homology"/>
<feature type="chain" id="PRO_1000047182" description="2,3,4,5-tetrahydropyridine-2,6-dicarboxylate N-succinyltransferase">
    <location>
        <begin position="1"/>
        <end position="274"/>
    </location>
</feature>
<feature type="binding site" evidence="1">
    <location>
        <position position="104"/>
    </location>
    <ligand>
        <name>substrate</name>
    </ligand>
</feature>
<feature type="binding site" evidence="1">
    <location>
        <position position="141"/>
    </location>
    <ligand>
        <name>substrate</name>
    </ligand>
</feature>
<gene>
    <name evidence="1" type="primary">dapD</name>
    <name type="ordered locus">Shew185_1442</name>
</gene>
<reference key="1">
    <citation type="submission" date="2007-07" db="EMBL/GenBank/DDBJ databases">
        <title>Complete sequence of chromosome of Shewanella baltica OS185.</title>
        <authorList>
            <consortium name="US DOE Joint Genome Institute"/>
            <person name="Copeland A."/>
            <person name="Lucas S."/>
            <person name="Lapidus A."/>
            <person name="Barry K."/>
            <person name="Glavina del Rio T."/>
            <person name="Dalin E."/>
            <person name="Tice H."/>
            <person name="Pitluck S."/>
            <person name="Sims D."/>
            <person name="Brettin T."/>
            <person name="Bruce D."/>
            <person name="Detter J.C."/>
            <person name="Han C."/>
            <person name="Schmutz J."/>
            <person name="Larimer F."/>
            <person name="Land M."/>
            <person name="Hauser L."/>
            <person name="Kyrpides N."/>
            <person name="Mikhailova N."/>
            <person name="Brettar I."/>
            <person name="Rodrigues J."/>
            <person name="Konstantinidis K."/>
            <person name="Tiedje J."/>
            <person name="Richardson P."/>
        </authorList>
    </citation>
    <scope>NUCLEOTIDE SEQUENCE [LARGE SCALE GENOMIC DNA]</scope>
    <source>
        <strain>OS185</strain>
    </source>
</reference>
<dbReference type="EC" id="2.3.1.117" evidence="1"/>
<dbReference type="EMBL" id="CP000753">
    <property type="protein sequence ID" value="ABS07592.1"/>
    <property type="molecule type" value="Genomic_DNA"/>
</dbReference>
<dbReference type="RefSeq" id="WP_006080976.1">
    <property type="nucleotide sequence ID" value="NC_009665.1"/>
</dbReference>
<dbReference type="SMR" id="A6WLA3"/>
<dbReference type="GeneID" id="11771727"/>
<dbReference type="KEGG" id="sbm:Shew185_1442"/>
<dbReference type="HOGENOM" id="CLU_050859_0_1_6"/>
<dbReference type="UniPathway" id="UPA00034">
    <property type="reaction ID" value="UER00019"/>
</dbReference>
<dbReference type="GO" id="GO:0005737">
    <property type="term" value="C:cytoplasm"/>
    <property type="evidence" value="ECO:0007669"/>
    <property type="project" value="UniProtKB-SubCell"/>
</dbReference>
<dbReference type="GO" id="GO:0008666">
    <property type="term" value="F:2,3,4,5-tetrahydropyridine-2,6-dicarboxylate N-succinyltransferase activity"/>
    <property type="evidence" value="ECO:0007669"/>
    <property type="project" value="UniProtKB-UniRule"/>
</dbReference>
<dbReference type="GO" id="GO:0016779">
    <property type="term" value="F:nucleotidyltransferase activity"/>
    <property type="evidence" value="ECO:0007669"/>
    <property type="project" value="TreeGrafter"/>
</dbReference>
<dbReference type="GO" id="GO:0019877">
    <property type="term" value="P:diaminopimelate biosynthetic process"/>
    <property type="evidence" value="ECO:0007669"/>
    <property type="project" value="UniProtKB-UniRule"/>
</dbReference>
<dbReference type="GO" id="GO:0009089">
    <property type="term" value="P:lysine biosynthetic process via diaminopimelate"/>
    <property type="evidence" value="ECO:0007669"/>
    <property type="project" value="UniProtKB-UniRule"/>
</dbReference>
<dbReference type="CDD" id="cd03350">
    <property type="entry name" value="LbH_THP_succinylT"/>
    <property type="match status" value="1"/>
</dbReference>
<dbReference type="Gene3D" id="2.160.10.10">
    <property type="entry name" value="Hexapeptide repeat proteins"/>
    <property type="match status" value="1"/>
</dbReference>
<dbReference type="Gene3D" id="1.10.166.10">
    <property type="entry name" value="Tetrahydrodipicolinate-N-succinyltransferase, N-terminal domain"/>
    <property type="match status" value="1"/>
</dbReference>
<dbReference type="HAMAP" id="MF_00811">
    <property type="entry name" value="DapD"/>
    <property type="match status" value="1"/>
</dbReference>
<dbReference type="InterPro" id="IPR005664">
    <property type="entry name" value="DapD_Trfase_Hexpep_rpt_fam"/>
</dbReference>
<dbReference type="InterPro" id="IPR001451">
    <property type="entry name" value="Hexapep"/>
</dbReference>
<dbReference type="InterPro" id="IPR018357">
    <property type="entry name" value="Hexapep_transf_CS"/>
</dbReference>
<dbReference type="InterPro" id="IPR023180">
    <property type="entry name" value="THP_succinylTrfase_dom1"/>
</dbReference>
<dbReference type="InterPro" id="IPR037133">
    <property type="entry name" value="THP_succinylTrfase_N_sf"/>
</dbReference>
<dbReference type="InterPro" id="IPR011004">
    <property type="entry name" value="Trimer_LpxA-like_sf"/>
</dbReference>
<dbReference type="NCBIfam" id="TIGR00965">
    <property type="entry name" value="dapD"/>
    <property type="match status" value="1"/>
</dbReference>
<dbReference type="NCBIfam" id="NF008808">
    <property type="entry name" value="PRK11830.1"/>
    <property type="match status" value="1"/>
</dbReference>
<dbReference type="PANTHER" id="PTHR19136:SF52">
    <property type="entry name" value="2,3,4,5-TETRAHYDROPYRIDINE-2,6-DICARBOXYLATE N-SUCCINYLTRANSFERASE"/>
    <property type="match status" value="1"/>
</dbReference>
<dbReference type="PANTHER" id="PTHR19136">
    <property type="entry name" value="MOLYBDENUM COFACTOR GUANYLYLTRANSFERASE"/>
    <property type="match status" value="1"/>
</dbReference>
<dbReference type="Pfam" id="PF14602">
    <property type="entry name" value="Hexapep_2"/>
    <property type="match status" value="1"/>
</dbReference>
<dbReference type="Pfam" id="PF14805">
    <property type="entry name" value="THDPS_N_2"/>
    <property type="match status" value="1"/>
</dbReference>
<dbReference type="SUPFAM" id="SSF51161">
    <property type="entry name" value="Trimeric LpxA-like enzymes"/>
    <property type="match status" value="1"/>
</dbReference>
<dbReference type="PROSITE" id="PS00101">
    <property type="entry name" value="HEXAPEP_TRANSFERASES"/>
    <property type="match status" value="1"/>
</dbReference>
<accession>A6WLA3</accession>